<proteinExistence type="inferred from homology"/>
<keyword id="KW-0150">Chloroplast</keyword>
<keyword id="KW-0240">DNA-directed RNA polymerase</keyword>
<keyword id="KW-0548">Nucleotidyltransferase</keyword>
<keyword id="KW-0934">Plastid</keyword>
<keyword id="KW-0804">Transcription</keyword>
<keyword id="KW-0808">Transferase</keyword>
<sequence>MKLFKISLIKNYFIEGSSYGLFNFDLQDFSNCDRVAWGNLLRRTLLKDLEGLRFGNSSIFISRSFSKIPYYHRVNEYSDIEQVNPSLLQVFSNFRNLHIFSSKPFYRKTSYSMIKVLTSRSYFSKDILLPNNLYVVNPDVQLFEFLSKRYKLRIISEICKGSGKSFSPIKKVNYVVEGIPYASLLLEIYTDLRANALSSLLATLRLINPKFAA</sequence>
<dbReference type="EC" id="2.7.7.6"/>
<dbReference type="EMBL" id="AY047486">
    <property type="protein sequence ID" value="AAL83366.1"/>
    <property type="molecule type" value="Genomic_DNA"/>
</dbReference>
<dbReference type="SMR" id="Q8SL88"/>
<dbReference type="GO" id="GO:0009507">
    <property type="term" value="C:chloroplast"/>
    <property type="evidence" value="ECO:0007669"/>
    <property type="project" value="UniProtKB-SubCell"/>
</dbReference>
<dbReference type="GO" id="GO:0000428">
    <property type="term" value="C:DNA-directed RNA polymerase complex"/>
    <property type="evidence" value="ECO:0007669"/>
    <property type="project" value="UniProtKB-KW"/>
</dbReference>
<dbReference type="GO" id="GO:0005739">
    <property type="term" value="C:mitochondrion"/>
    <property type="evidence" value="ECO:0007669"/>
    <property type="project" value="GOC"/>
</dbReference>
<dbReference type="GO" id="GO:0003899">
    <property type="term" value="F:DNA-directed RNA polymerase activity"/>
    <property type="evidence" value="ECO:0007669"/>
    <property type="project" value="UniProtKB-EC"/>
</dbReference>
<dbReference type="GO" id="GO:0046983">
    <property type="term" value="F:protein dimerization activity"/>
    <property type="evidence" value="ECO:0007669"/>
    <property type="project" value="InterPro"/>
</dbReference>
<dbReference type="GO" id="GO:0006351">
    <property type="term" value="P:DNA-templated transcription"/>
    <property type="evidence" value="ECO:0007669"/>
    <property type="project" value="InterPro"/>
</dbReference>
<dbReference type="Gene3D" id="2.170.120.12">
    <property type="entry name" value="DNA-directed RNA polymerase, insert domain"/>
    <property type="match status" value="1"/>
</dbReference>
<dbReference type="Gene3D" id="3.30.1360.10">
    <property type="entry name" value="RNA polymerase, RBP11-like subunit"/>
    <property type="match status" value="1"/>
</dbReference>
<dbReference type="InterPro" id="IPR011263">
    <property type="entry name" value="DNA-dir_RNA_pol_RpoA/D/Rpb3"/>
</dbReference>
<dbReference type="InterPro" id="IPR036603">
    <property type="entry name" value="RBP11-like"/>
</dbReference>
<dbReference type="InterPro" id="IPR036643">
    <property type="entry name" value="RNApol_insert_sf"/>
</dbReference>
<dbReference type="Pfam" id="PF01193">
    <property type="entry name" value="RNA_pol_L"/>
    <property type="match status" value="1"/>
</dbReference>
<dbReference type="SUPFAM" id="SSF56553">
    <property type="entry name" value="Insert subdomain of RNA polymerase alpha subunit"/>
    <property type="match status" value="1"/>
</dbReference>
<dbReference type="SUPFAM" id="SSF55257">
    <property type="entry name" value="RBP11-like subunits of RNA polymerase"/>
    <property type="match status" value="1"/>
</dbReference>
<protein>
    <recommendedName>
        <fullName>DNA-directed RNA polymerase subunit alpha</fullName>
        <shortName>PEP</shortName>
        <ecNumber>2.7.7.6</ecNumber>
    </recommendedName>
    <alternativeName>
        <fullName>Plastid-encoded RNA polymerase subunit alpha</fullName>
        <shortName>RNA polymerase subunit alpha</shortName>
    </alternativeName>
</protein>
<name>RPOA_EUGST</name>
<organism>
    <name type="scientific">Euglena stellata</name>
    <dbReference type="NCBI Taxonomy" id="38278"/>
    <lineage>
        <taxon>Eukaryota</taxon>
        <taxon>Discoba</taxon>
        <taxon>Euglenozoa</taxon>
        <taxon>Euglenida</taxon>
        <taxon>Spirocuta</taxon>
        <taxon>Euglenophyceae</taxon>
        <taxon>Euglenales</taxon>
        <taxon>Euglenaceae</taxon>
        <taxon>Euglena</taxon>
    </lineage>
</organism>
<evidence type="ECO:0000250" key="1"/>
<evidence type="ECO:0000305" key="2"/>
<gene>
    <name type="primary">rpoA</name>
</gene>
<comment type="function">
    <text evidence="1">DNA-dependent RNA polymerase catalyzes the transcription of DNA into RNA using the four ribonucleoside triphosphates as substrates.</text>
</comment>
<comment type="catalytic activity">
    <reaction>
        <text>RNA(n) + a ribonucleoside 5'-triphosphate = RNA(n+1) + diphosphate</text>
        <dbReference type="Rhea" id="RHEA:21248"/>
        <dbReference type="Rhea" id="RHEA-COMP:14527"/>
        <dbReference type="Rhea" id="RHEA-COMP:17342"/>
        <dbReference type="ChEBI" id="CHEBI:33019"/>
        <dbReference type="ChEBI" id="CHEBI:61557"/>
        <dbReference type="ChEBI" id="CHEBI:140395"/>
        <dbReference type="EC" id="2.7.7.6"/>
    </reaction>
</comment>
<comment type="subunit">
    <text evidence="1">In plastids the minimal PEP RNA polymerase catalytic core is composed of four subunits: alpha, beta, beta', and beta''. When a (nuclear-encoded) sigma factor is associated with the core the holoenzyme is formed, which can initiate transcription (By similarity).</text>
</comment>
<comment type="subcellular location">
    <subcellularLocation>
        <location>Plastid</location>
        <location>Chloroplast</location>
    </subcellularLocation>
</comment>
<comment type="similarity">
    <text evidence="2">Belongs to the RNA polymerase alpha chain family.</text>
</comment>
<comment type="caution">
    <text evidence="2">The C-terminal domain thought to be required for interaction with some regulatory factors is missing from this protein.</text>
</comment>
<accession>Q8SL88</accession>
<reference key="1">
    <citation type="journal article" date="2002" name="Nucleic Acids Res.">
        <title>Identification and comparative analysis of the chloroplast alpha-subunit gene of DNA-dependent RNA polymerase from seven Euglena species.</title>
        <authorList>
            <person name="Sheveleva E.V."/>
            <person name="Giordani N.V."/>
            <person name="Hallick R.B."/>
        </authorList>
    </citation>
    <scope>NUCLEOTIDE SEQUENCE [GENOMIC DNA]</scope>
    <source>
        <strain>UTEX 327</strain>
    </source>
</reference>
<geneLocation type="chloroplast"/>
<feature type="chain" id="PRO_0000175509" description="DNA-directed RNA polymerase subunit alpha">
    <location>
        <begin position="1"/>
        <end position="213"/>
    </location>
</feature>